<sequence>MIKKLSIVILFSCISFVLSTNFCNKELCKRQNGPQSFTYLKHIGCRHTGKNANTCPRDAKILPMSTKRKNLILKVHNRLRNKVALGKLPGFPKAARMPILRWDDELAYLAELNVKQCKMEHDQCRNTDKFKYAGQNLAYTMGTPQKNAVRIKKLIRAWFKEHENATASFIDKYRDHPQGRVIGHFTAMIQDRTDTVGCAILRHSGNKYFFWPVIMVLQI</sequence>
<organism evidence="12">
    <name type="scientific">Culicoides nubeculosus</name>
    <name type="common">Biting midge</name>
    <dbReference type="NCBI Taxonomy" id="144565"/>
    <lineage>
        <taxon>Eukaryota</taxon>
        <taxon>Metazoa</taxon>
        <taxon>Ecdysozoa</taxon>
        <taxon>Arthropoda</taxon>
        <taxon>Hexapoda</taxon>
        <taxon>Insecta</taxon>
        <taxon>Pterygota</taxon>
        <taxon>Neoptera</taxon>
        <taxon>Endopterygota</taxon>
        <taxon>Diptera</taxon>
        <taxon>Nematocera</taxon>
        <taxon>Chironomoidea</taxon>
        <taxon>Ceratopogonidae</taxon>
        <taxon>Ceratopogoninae</taxon>
        <taxon>Culicoides</taxon>
        <taxon>Monoculicoides</taxon>
    </lineage>
</organism>
<dbReference type="EMBL" id="EU978899">
    <property type="protein sequence ID" value="ACM40888.1"/>
    <property type="molecule type" value="mRNA"/>
</dbReference>
<dbReference type="SMR" id="B9URJ1"/>
<dbReference type="GO" id="GO:0005576">
    <property type="term" value="C:extracellular region"/>
    <property type="evidence" value="ECO:0000314"/>
    <property type="project" value="UniProtKB"/>
</dbReference>
<dbReference type="CDD" id="cd05380">
    <property type="entry name" value="CAP_euk"/>
    <property type="match status" value="1"/>
</dbReference>
<dbReference type="Gene3D" id="3.40.33.10">
    <property type="entry name" value="CAP"/>
    <property type="match status" value="1"/>
</dbReference>
<dbReference type="InterPro" id="IPR014044">
    <property type="entry name" value="CAP_dom"/>
</dbReference>
<dbReference type="InterPro" id="IPR035940">
    <property type="entry name" value="CAP_sf"/>
</dbReference>
<dbReference type="InterPro" id="IPR001283">
    <property type="entry name" value="CRISP-related"/>
</dbReference>
<dbReference type="InterPro" id="IPR034763">
    <property type="entry name" value="P14a_insect"/>
</dbReference>
<dbReference type="PANTHER" id="PTHR10334">
    <property type="entry name" value="CYSTEINE-RICH SECRETORY PROTEIN-RELATED"/>
    <property type="match status" value="1"/>
</dbReference>
<dbReference type="Pfam" id="PF00188">
    <property type="entry name" value="CAP"/>
    <property type="match status" value="1"/>
</dbReference>
<dbReference type="PIRSF" id="PIRSF038921">
    <property type="entry name" value="P14a"/>
    <property type="match status" value="1"/>
</dbReference>
<dbReference type="SMART" id="SM00198">
    <property type="entry name" value="SCP"/>
    <property type="match status" value="1"/>
</dbReference>
<dbReference type="SUPFAM" id="SSF55797">
    <property type="entry name" value="PR-1-like"/>
    <property type="match status" value="1"/>
</dbReference>
<accession>B9URJ1</accession>
<keyword id="KW-0020">Allergen</keyword>
<keyword id="KW-1015">Disulfide bond</keyword>
<keyword id="KW-0964">Secreted</keyword>
<keyword id="KW-0732">Signal</keyword>
<evidence type="ECO:0000250" key="1">
    <source>
        <dbReference type="UniProtKB" id="P35778"/>
    </source>
</evidence>
<evidence type="ECO:0000255" key="2"/>
<evidence type="ECO:0000269" key="3">
    <source>
    </source>
</evidence>
<evidence type="ECO:0000269" key="4">
    <source>
    </source>
</evidence>
<evidence type="ECO:0000269" key="5">
    <source>
    </source>
</evidence>
<evidence type="ECO:0000303" key="6">
    <source>
    </source>
</evidence>
<evidence type="ECO:0000303" key="7">
    <source>
    </source>
</evidence>
<evidence type="ECO:0000303" key="8">
    <source>
    </source>
</evidence>
<evidence type="ECO:0000305" key="9"/>
<evidence type="ECO:0000305" key="10">
    <source>
    </source>
</evidence>
<evidence type="ECO:0000305" key="11">
    <source>
    </source>
</evidence>
<evidence type="ECO:0000312" key="12">
    <source>
        <dbReference type="EMBL" id="ACM40888.1"/>
    </source>
</evidence>
<proteinExistence type="evidence at protein level"/>
<feature type="signal peptide" evidence="2">
    <location>
        <begin position="1"/>
        <end position="19"/>
    </location>
</feature>
<feature type="chain" id="PRO_5002891115" description="Antigen 5 like allergen Cul n 1" evidence="2">
    <location>
        <begin position="20"/>
        <end position="219"/>
    </location>
</feature>
<feature type="domain" description="SCP" evidence="2">
    <location>
        <begin position="73"/>
        <end position="211"/>
    </location>
</feature>
<feature type="disulfide bond" evidence="1">
    <location>
        <begin position="23"/>
        <end position="45"/>
    </location>
</feature>
<feature type="disulfide bond" evidence="1">
    <location>
        <begin position="28"/>
        <end position="124"/>
    </location>
</feature>
<feature type="disulfide bond" evidence="1">
    <location>
        <begin position="55"/>
        <end position="117"/>
    </location>
</feature>
<comment type="subcellular location">
    <subcellularLocation>
        <location evidence="10 11">Secreted</location>
    </subcellularLocation>
</comment>
<comment type="tissue specificity">
    <text evidence="3 4">Expressed in salivary glands.</text>
</comment>
<comment type="allergen">
    <text evidence="4 5">Causes an allergic reaction in horses (PubMed:20537727, PubMed:23891138). Binds to IgE in 35% of the 48 Icelandic horses living in Switzerland tested affected by insect bite hypersensitivity (IBH), a recurrent seasonal dermatitis of the horse, caused by bites of Culicoides (midge) and sometimes Simulium (black fly) species. Does not bind to IgE of 27 horses out of the 29 horses living in Switzerland (24 Icelandic, 2 Swiss Warmbloods and 2 Shetland ponies) tested unaffected by IBH. Clear immediate and late phase hypersensitivity reactions to this protein in IBH-affected horses are evident by intradermal skin test (IDT), whereas control horses unaffected by IBH do not develop relevant immediate hypersensitivity reactions (PubMed:20537727). Binds to IgE of 18% of the 167 horses living in Belgium tested affected by IBH. Binds to IgE of 6% of the 176 horses living in Belgium tested not affected by IBH (PubMed:23891138).</text>
</comment>
<comment type="similarity">
    <text evidence="9">Belongs to the CRISP family.</text>
</comment>
<name>AG5L1_CULNU</name>
<reference evidence="12" key="1">
    <citation type="journal article" date="2009" name="Insect Mol. Biol.">
        <title>Identification and isolation of cDNA clones encoding the abundant secreted proteins in the saliva proteome of Culicoides nubeculosus.</title>
        <authorList>
            <person name="Russell C.L."/>
            <person name="Heesom K.J."/>
            <person name="Arthur C.J."/>
            <person name="Helps C.R."/>
            <person name="Mellor P.S."/>
            <person name="Day M.J."/>
            <person name="Torsteinsdottir S."/>
            <person name="Bjoernsdottir T.S."/>
            <person name="Wilson A.D."/>
        </authorList>
    </citation>
    <scope>NUCLEOTIDE SEQUENCE [MRNA]</scope>
    <scope>TISSUE SPECIFICITY</scope>
    <source>
        <tissue evidence="7 12">Salivary gland</tissue>
    </source>
</reference>
<reference key="2">
    <citation type="journal article" date="2010" name="Vet. Immunol. Immunopathol.">
        <title>Cloning, production and characterization of antigen 5 like proteins from Simulium vittatum and Culicoides nubeculosus, the first cross-reactive allergen associated with equine insect bite hypersensitivity.</title>
        <authorList>
            <person name="Schaffartzik A."/>
            <person name="Marti E."/>
            <person name="Crameri R."/>
            <person name="Rhyner C."/>
        </authorList>
    </citation>
    <scope>TISSUE SPECIFICITY</scope>
    <scope>ALLERGEN</scope>
</reference>
<reference key="3">
    <citation type="journal article" date="2013" name="Vet. J.">
        <title>Evaluation of an IgE ELISA with Culicoides spp. extracts and recombinant salivary antigens for diagnosis of insect bite hypersensitivity in Warmblood horses.</title>
        <authorList>
            <person name="Peeters L.M."/>
            <person name="Janssens S."/>
            <person name="Goddeeris B.M."/>
            <person name="De Keyser K."/>
            <person name="Wilson A.D."/>
            <person name="Kaufmann C."/>
            <person name="Schaffartzik A."/>
            <person name="Marti E."/>
            <person name="Buys N."/>
        </authorList>
    </citation>
    <scope>ALLERGEN</scope>
</reference>
<protein>
    <recommendedName>
        <fullName evidence="7">Antigen 5 like allergen Cul n 1</fullName>
        <shortName evidence="7">Ag5 like allergen Cul n 1</shortName>
    </recommendedName>
    <alternativeName>
        <fullName evidence="8">Allergen Culn1</fullName>
    </alternativeName>
    <alternativeName>
        <fullName evidence="6">Antigen 5 family protein</fullName>
    </alternativeName>
    <alternativeName>
        <fullName evidence="9">Cul n 12</fullName>
    </alternativeName>
</protein>